<accession>Q9KSY9</accession>
<dbReference type="EC" id="3.4.24.-" evidence="1"/>
<dbReference type="EMBL" id="AE003852">
    <property type="protein sequence ID" value="AAF94276.1"/>
    <property type="molecule type" value="Genomic_DNA"/>
</dbReference>
<dbReference type="PIR" id="E82239">
    <property type="entry name" value="E82239"/>
</dbReference>
<dbReference type="RefSeq" id="NP_230762.1">
    <property type="nucleotide sequence ID" value="NC_002505.1"/>
</dbReference>
<dbReference type="RefSeq" id="WP_000821682.1">
    <property type="nucleotide sequence ID" value="NZ_LT906614.1"/>
</dbReference>
<dbReference type="SMR" id="Q9KSY9"/>
<dbReference type="STRING" id="243277.VC_1117"/>
<dbReference type="MEROPS" id="M48.002"/>
<dbReference type="DNASU" id="2614387"/>
<dbReference type="EnsemblBacteria" id="AAF94276">
    <property type="protein sequence ID" value="AAF94276"/>
    <property type="gene ID" value="VC_1117"/>
</dbReference>
<dbReference type="GeneID" id="69720192"/>
<dbReference type="KEGG" id="vch:VC_1117"/>
<dbReference type="PATRIC" id="fig|243277.26.peg.1066"/>
<dbReference type="eggNOG" id="COG0501">
    <property type="taxonomic scope" value="Bacteria"/>
</dbReference>
<dbReference type="HOGENOM" id="CLU_042266_1_0_6"/>
<dbReference type="Proteomes" id="UP000000584">
    <property type="component" value="Chromosome 1"/>
</dbReference>
<dbReference type="GO" id="GO:0005886">
    <property type="term" value="C:plasma membrane"/>
    <property type="evidence" value="ECO:0007669"/>
    <property type="project" value="UniProtKB-SubCell"/>
</dbReference>
<dbReference type="GO" id="GO:0004222">
    <property type="term" value="F:metalloendopeptidase activity"/>
    <property type="evidence" value="ECO:0007669"/>
    <property type="project" value="UniProtKB-UniRule"/>
</dbReference>
<dbReference type="GO" id="GO:0008270">
    <property type="term" value="F:zinc ion binding"/>
    <property type="evidence" value="ECO:0007669"/>
    <property type="project" value="UniProtKB-UniRule"/>
</dbReference>
<dbReference type="GO" id="GO:0006508">
    <property type="term" value="P:proteolysis"/>
    <property type="evidence" value="ECO:0007669"/>
    <property type="project" value="UniProtKB-KW"/>
</dbReference>
<dbReference type="CDD" id="cd07335">
    <property type="entry name" value="M48B_HtpX_like"/>
    <property type="match status" value="1"/>
</dbReference>
<dbReference type="FunFam" id="3.30.2010.10:FF:000001">
    <property type="entry name" value="Protease HtpX"/>
    <property type="match status" value="1"/>
</dbReference>
<dbReference type="Gene3D" id="3.30.2010.10">
    <property type="entry name" value="Metalloproteases ('zincins'), catalytic domain"/>
    <property type="match status" value="1"/>
</dbReference>
<dbReference type="HAMAP" id="MF_00188">
    <property type="entry name" value="Pept_M48_protease_HtpX"/>
    <property type="match status" value="1"/>
</dbReference>
<dbReference type="InterPro" id="IPR050083">
    <property type="entry name" value="HtpX_protease"/>
</dbReference>
<dbReference type="InterPro" id="IPR022919">
    <property type="entry name" value="Pept_M48_protease_HtpX"/>
</dbReference>
<dbReference type="InterPro" id="IPR001915">
    <property type="entry name" value="Peptidase_M48"/>
</dbReference>
<dbReference type="NCBIfam" id="NF003965">
    <property type="entry name" value="PRK05457.1"/>
    <property type="match status" value="1"/>
</dbReference>
<dbReference type="PANTHER" id="PTHR43221">
    <property type="entry name" value="PROTEASE HTPX"/>
    <property type="match status" value="1"/>
</dbReference>
<dbReference type="PANTHER" id="PTHR43221:SF1">
    <property type="entry name" value="PROTEASE HTPX"/>
    <property type="match status" value="1"/>
</dbReference>
<dbReference type="Pfam" id="PF01435">
    <property type="entry name" value="Peptidase_M48"/>
    <property type="match status" value="1"/>
</dbReference>
<sequence length="287" mass="31230">MKRILLFLATNLAVVLVLSVVLNIVYAVTGMQPGSLSGLLVMAAVFGFGGAFISLLMSKSMALRSVGGVVIDTPRNEMEHWLLETVRRQANQAGIGMPTVAIYDAPDMNAFATGAKRDDSLVAVSTGLLHNMTRDEAEAVLAHEVSHIANGDMVTMTLMQGVVNTFVIFLSRFIANIVASRDSEEGEGSNMMVYFGVSMVLELVFGFLASFITMWYSRHREFHADAGAAQLVGKHKMIAALERLKMGQESHLEGSMMAFGITGKRSLSELMMTHPPLEKRIAALRNM</sequence>
<proteinExistence type="inferred from homology"/>
<feature type="chain" id="PRO_0000138903" description="Protease HtpX">
    <location>
        <begin position="1"/>
        <end position="287"/>
    </location>
</feature>
<feature type="transmembrane region" description="Helical" evidence="1">
    <location>
        <begin position="4"/>
        <end position="24"/>
    </location>
</feature>
<feature type="transmembrane region" description="Helical" evidence="1">
    <location>
        <begin position="36"/>
        <end position="56"/>
    </location>
</feature>
<feature type="transmembrane region" description="Helical" evidence="1">
    <location>
        <begin position="158"/>
        <end position="178"/>
    </location>
</feature>
<feature type="transmembrane region" description="Helical" evidence="1">
    <location>
        <begin position="192"/>
        <end position="212"/>
    </location>
</feature>
<feature type="active site" evidence="1">
    <location>
        <position position="144"/>
    </location>
</feature>
<feature type="binding site" evidence="1">
    <location>
        <position position="143"/>
    </location>
    <ligand>
        <name>Zn(2+)</name>
        <dbReference type="ChEBI" id="CHEBI:29105"/>
        <note>catalytic</note>
    </ligand>
</feature>
<feature type="binding site" evidence="1">
    <location>
        <position position="147"/>
    </location>
    <ligand>
        <name>Zn(2+)</name>
        <dbReference type="ChEBI" id="CHEBI:29105"/>
        <note>catalytic</note>
    </ligand>
</feature>
<feature type="binding site" evidence="1">
    <location>
        <position position="221"/>
    </location>
    <ligand>
        <name>Zn(2+)</name>
        <dbReference type="ChEBI" id="CHEBI:29105"/>
        <note>catalytic</note>
    </ligand>
</feature>
<comment type="cofactor">
    <cofactor evidence="1">
        <name>Zn(2+)</name>
        <dbReference type="ChEBI" id="CHEBI:29105"/>
    </cofactor>
    <text evidence="1">Binds 1 zinc ion per subunit.</text>
</comment>
<comment type="subcellular location">
    <subcellularLocation>
        <location evidence="1">Cell inner membrane</location>
        <topology evidence="1">Multi-pass membrane protein</topology>
    </subcellularLocation>
</comment>
<comment type="similarity">
    <text evidence="1">Belongs to the peptidase M48B family.</text>
</comment>
<keyword id="KW-0997">Cell inner membrane</keyword>
<keyword id="KW-1003">Cell membrane</keyword>
<keyword id="KW-0378">Hydrolase</keyword>
<keyword id="KW-0472">Membrane</keyword>
<keyword id="KW-0479">Metal-binding</keyword>
<keyword id="KW-0482">Metalloprotease</keyword>
<keyword id="KW-0645">Protease</keyword>
<keyword id="KW-1185">Reference proteome</keyword>
<keyword id="KW-0812">Transmembrane</keyword>
<keyword id="KW-1133">Transmembrane helix</keyword>
<keyword id="KW-0862">Zinc</keyword>
<evidence type="ECO:0000255" key="1">
    <source>
        <dbReference type="HAMAP-Rule" id="MF_00188"/>
    </source>
</evidence>
<name>HTPX_VIBCH</name>
<organism>
    <name type="scientific">Vibrio cholerae serotype O1 (strain ATCC 39315 / El Tor Inaba N16961)</name>
    <dbReference type="NCBI Taxonomy" id="243277"/>
    <lineage>
        <taxon>Bacteria</taxon>
        <taxon>Pseudomonadati</taxon>
        <taxon>Pseudomonadota</taxon>
        <taxon>Gammaproteobacteria</taxon>
        <taxon>Vibrionales</taxon>
        <taxon>Vibrionaceae</taxon>
        <taxon>Vibrio</taxon>
    </lineage>
</organism>
<protein>
    <recommendedName>
        <fullName evidence="1">Protease HtpX</fullName>
        <ecNumber evidence="1">3.4.24.-</ecNumber>
    </recommendedName>
    <alternativeName>
        <fullName evidence="1">Heat shock protein HtpX</fullName>
    </alternativeName>
</protein>
<reference key="1">
    <citation type="journal article" date="2000" name="Nature">
        <title>DNA sequence of both chromosomes of the cholera pathogen Vibrio cholerae.</title>
        <authorList>
            <person name="Heidelberg J.F."/>
            <person name="Eisen J.A."/>
            <person name="Nelson W.C."/>
            <person name="Clayton R.A."/>
            <person name="Gwinn M.L."/>
            <person name="Dodson R.J."/>
            <person name="Haft D.H."/>
            <person name="Hickey E.K."/>
            <person name="Peterson J.D."/>
            <person name="Umayam L.A."/>
            <person name="Gill S.R."/>
            <person name="Nelson K.E."/>
            <person name="Read T.D."/>
            <person name="Tettelin H."/>
            <person name="Richardson D.L."/>
            <person name="Ermolaeva M.D."/>
            <person name="Vamathevan J.J."/>
            <person name="Bass S."/>
            <person name="Qin H."/>
            <person name="Dragoi I."/>
            <person name="Sellers P."/>
            <person name="McDonald L.A."/>
            <person name="Utterback T.R."/>
            <person name="Fleischmann R.D."/>
            <person name="Nierman W.C."/>
            <person name="White O."/>
            <person name="Salzberg S.L."/>
            <person name="Smith H.O."/>
            <person name="Colwell R.R."/>
            <person name="Mekalanos J.J."/>
            <person name="Venter J.C."/>
            <person name="Fraser C.M."/>
        </authorList>
    </citation>
    <scope>NUCLEOTIDE SEQUENCE [LARGE SCALE GENOMIC DNA]</scope>
    <source>
        <strain>ATCC 39315 / El Tor Inaba N16961</strain>
    </source>
</reference>
<gene>
    <name evidence="1" type="primary">htpX</name>
    <name type="ordered locus">VC_1117</name>
</gene>